<protein>
    <recommendedName>
        <fullName evidence="1">Glycerol-3-phosphate dehydrogenase [NAD(P)+]</fullName>
        <ecNumber evidence="1">1.1.1.94</ecNumber>
    </recommendedName>
    <alternativeName>
        <fullName evidence="1">NAD(P)(+)-dependent glycerol-3-phosphate dehydrogenase</fullName>
    </alternativeName>
    <alternativeName>
        <fullName evidence="1">NAD(P)H-dependent dihydroxyacetone-phosphate reductase</fullName>
    </alternativeName>
</protein>
<organism>
    <name type="scientific">Acinetobacter baumannii (strain AB307-0294)</name>
    <dbReference type="NCBI Taxonomy" id="557600"/>
    <lineage>
        <taxon>Bacteria</taxon>
        <taxon>Pseudomonadati</taxon>
        <taxon>Pseudomonadota</taxon>
        <taxon>Gammaproteobacteria</taxon>
        <taxon>Moraxellales</taxon>
        <taxon>Moraxellaceae</taxon>
        <taxon>Acinetobacter</taxon>
        <taxon>Acinetobacter calcoaceticus/baumannii complex</taxon>
    </lineage>
</organism>
<proteinExistence type="inferred from homology"/>
<keyword id="KW-0963">Cytoplasm</keyword>
<keyword id="KW-0444">Lipid biosynthesis</keyword>
<keyword id="KW-0443">Lipid metabolism</keyword>
<keyword id="KW-0520">NAD</keyword>
<keyword id="KW-0521">NADP</keyword>
<keyword id="KW-0547">Nucleotide-binding</keyword>
<keyword id="KW-0560">Oxidoreductase</keyword>
<keyword id="KW-0594">Phospholipid biosynthesis</keyword>
<keyword id="KW-1208">Phospholipid metabolism</keyword>
<comment type="function">
    <text evidence="1">Catalyzes the reduction of the glycolytic intermediate dihydroxyacetone phosphate (DHAP) to sn-glycerol 3-phosphate (G3P), the key precursor for phospholipid synthesis.</text>
</comment>
<comment type="catalytic activity">
    <reaction evidence="1">
        <text>sn-glycerol 3-phosphate + NAD(+) = dihydroxyacetone phosphate + NADH + H(+)</text>
        <dbReference type="Rhea" id="RHEA:11092"/>
        <dbReference type="ChEBI" id="CHEBI:15378"/>
        <dbReference type="ChEBI" id="CHEBI:57540"/>
        <dbReference type="ChEBI" id="CHEBI:57597"/>
        <dbReference type="ChEBI" id="CHEBI:57642"/>
        <dbReference type="ChEBI" id="CHEBI:57945"/>
        <dbReference type="EC" id="1.1.1.94"/>
    </reaction>
    <physiologicalReaction direction="right-to-left" evidence="1">
        <dbReference type="Rhea" id="RHEA:11094"/>
    </physiologicalReaction>
</comment>
<comment type="catalytic activity">
    <reaction evidence="1">
        <text>sn-glycerol 3-phosphate + NADP(+) = dihydroxyacetone phosphate + NADPH + H(+)</text>
        <dbReference type="Rhea" id="RHEA:11096"/>
        <dbReference type="ChEBI" id="CHEBI:15378"/>
        <dbReference type="ChEBI" id="CHEBI:57597"/>
        <dbReference type="ChEBI" id="CHEBI:57642"/>
        <dbReference type="ChEBI" id="CHEBI:57783"/>
        <dbReference type="ChEBI" id="CHEBI:58349"/>
        <dbReference type="EC" id="1.1.1.94"/>
    </reaction>
    <physiologicalReaction direction="right-to-left" evidence="1">
        <dbReference type="Rhea" id="RHEA:11098"/>
    </physiologicalReaction>
</comment>
<comment type="pathway">
    <text evidence="1">Membrane lipid metabolism; glycerophospholipid metabolism.</text>
</comment>
<comment type="subcellular location">
    <subcellularLocation>
        <location evidence="1">Cytoplasm</location>
    </subcellularLocation>
</comment>
<comment type="similarity">
    <text evidence="1">Belongs to the NAD-dependent glycerol-3-phosphate dehydrogenase family.</text>
</comment>
<name>GPDA_ACIB3</name>
<dbReference type="EC" id="1.1.1.94" evidence="1"/>
<dbReference type="EMBL" id="CP001172">
    <property type="protein sequence ID" value="ACJ57536.1"/>
    <property type="molecule type" value="Genomic_DNA"/>
</dbReference>
<dbReference type="RefSeq" id="WP_000807316.1">
    <property type="nucleotide sequence ID" value="NZ_CP001172.1"/>
</dbReference>
<dbReference type="SMR" id="B7GZW3"/>
<dbReference type="HOGENOM" id="CLU_033449_0_2_6"/>
<dbReference type="UniPathway" id="UPA00940"/>
<dbReference type="Proteomes" id="UP000006924">
    <property type="component" value="Chromosome"/>
</dbReference>
<dbReference type="GO" id="GO:0005829">
    <property type="term" value="C:cytosol"/>
    <property type="evidence" value="ECO:0007669"/>
    <property type="project" value="TreeGrafter"/>
</dbReference>
<dbReference type="GO" id="GO:0047952">
    <property type="term" value="F:glycerol-3-phosphate dehydrogenase [NAD(P)+] activity"/>
    <property type="evidence" value="ECO:0007669"/>
    <property type="project" value="UniProtKB-UniRule"/>
</dbReference>
<dbReference type="GO" id="GO:0051287">
    <property type="term" value="F:NAD binding"/>
    <property type="evidence" value="ECO:0007669"/>
    <property type="project" value="InterPro"/>
</dbReference>
<dbReference type="GO" id="GO:0005975">
    <property type="term" value="P:carbohydrate metabolic process"/>
    <property type="evidence" value="ECO:0007669"/>
    <property type="project" value="InterPro"/>
</dbReference>
<dbReference type="GO" id="GO:0046167">
    <property type="term" value="P:glycerol-3-phosphate biosynthetic process"/>
    <property type="evidence" value="ECO:0007669"/>
    <property type="project" value="UniProtKB-UniRule"/>
</dbReference>
<dbReference type="GO" id="GO:0046168">
    <property type="term" value="P:glycerol-3-phosphate catabolic process"/>
    <property type="evidence" value="ECO:0007669"/>
    <property type="project" value="InterPro"/>
</dbReference>
<dbReference type="GO" id="GO:0046474">
    <property type="term" value="P:glycerophospholipid biosynthetic process"/>
    <property type="evidence" value="ECO:0007669"/>
    <property type="project" value="TreeGrafter"/>
</dbReference>
<dbReference type="FunFam" id="1.10.1040.10:FF:000001">
    <property type="entry name" value="Glycerol-3-phosphate dehydrogenase [NAD(P)+]"/>
    <property type="match status" value="1"/>
</dbReference>
<dbReference type="FunFam" id="3.40.50.720:FF:000019">
    <property type="entry name" value="Glycerol-3-phosphate dehydrogenase [NAD(P)+]"/>
    <property type="match status" value="1"/>
</dbReference>
<dbReference type="Gene3D" id="1.10.1040.10">
    <property type="entry name" value="N-(1-d-carboxylethyl)-l-norvaline Dehydrogenase, domain 2"/>
    <property type="match status" value="1"/>
</dbReference>
<dbReference type="Gene3D" id="3.40.50.720">
    <property type="entry name" value="NAD(P)-binding Rossmann-like Domain"/>
    <property type="match status" value="1"/>
</dbReference>
<dbReference type="HAMAP" id="MF_00394">
    <property type="entry name" value="NAD_Glyc3P_dehydrog"/>
    <property type="match status" value="1"/>
</dbReference>
<dbReference type="InterPro" id="IPR008927">
    <property type="entry name" value="6-PGluconate_DH-like_C_sf"/>
</dbReference>
<dbReference type="InterPro" id="IPR013328">
    <property type="entry name" value="6PGD_dom2"/>
</dbReference>
<dbReference type="InterPro" id="IPR006168">
    <property type="entry name" value="G3P_DH_NAD-dep"/>
</dbReference>
<dbReference type="InterPro" id="IPR006109">
    <property type="entry name" value="G3P_DH_NAD-dep_C"/>
</dbReference>
<dbReference type="InterPro" id="IPR011128">
    <property type="entry name" value="G3P_DH_NAD-dep_N"/>
</dbReference>
<dbReference type="InterPro" id="IPR036291">
    <property type="entry name" value="NAD(P)-bd_dom_sf"/>
</dbReference>
<dbReference type="NCBIfam" id="NF000940">
    <property type="entry name" value="PRK00094.1-2"/>
    <property type="match status" value="1"/>
</dbReference>
<dbReference type="NCBIfam" id="NF000942">
    <property type="entry name" value="PRK00094.1-4"/>
    <property type="match status" value="1"/>
</dbReference>
<dbReference type="NCBIfam" id="NF000944">
    <property type="entry name" value="PRK00094.2-2"/>
    <property type="match status" value="1"/>
</dbReference>
<dbReference type="NCBIfam" id="NF000946">
    <property type="entry name" value="PRK00094.2-4"/>
    <property type="match status" value="1"/>
</dbReference>
<dbReference type="PANTHER" id="PTHR11728">
    <property type="entry name" value="GLYCEROL-3-PHOSPHATE DEHYDROGENASE"/>
    <property type="match status" value="1"/>
</dbReference>
<dbReference type="PANTHER" id="PTHR11728:SF1">
    <property type="entry name" value="GLYCEROL-3-PHOSPHATE DEHYDROGENASE [NAD(+)] 2, CHLOROPLASTIC"/>
    <property type="match status" value="1"/>
</dbReference>
<dbReference type="Pfam" id="PF07479">
    <property type="entry name" value="NAD_Gly3P_dh_C"/>
    <property type="match status" value="1"/>
</dbReference>
<dbReference type="Pfam" id="PF01210">
    <property type="entry name" value="NAD_Gly3P_dh_N"/>
    <property type="match status" value="1"/>
</dbReference>
<dbReference type="PIRSF" id="PIRSF000114">
    <property type="entry name" value="Glycerol-3-P_dh"/>
    <property type="match status" value="1"/>
</dbReference>
<dbReference type="PRINTS" id="PR00077">
    <property type="entry name" value="GPDHDRGNASE"/>
</dbReference>
<dbReference type="SUPFAM" id="SSF48179">
    <property type="entry name" value="6-phosphogluconate dehydrogenase C-terminal domain-like"/>
    <property type="match status" value="1"/>
</dbReference>
<dbReference type="SUPFAM" id="SSF51735">
    <property type="entry name" value="NAD(P)-binding Rossmann-fold domains"/>
    <property type="match status" value="1"/>
</dbReference>
<dbReference type="PROSITE" id="PS00957">
    <property type="entry name" value="NAD_G3PDH"/>
    <property type="match status" value="1"/>
</dbReference>
<accession>B7GZW3</accession>
<feature type="chain" id="PRO_1000123105" description="Glycerol-3-phosphate dehydrogenase [NAD(P)+]">
    <location>
        <begin position="1"/>
        <end position="357"/>
    </location>
</feature>
<feature type="active site" description="Proton acceptor" evidence="1">
    <location>
        <position position="207"/>
    </location>
</feature>
<feature type="binding site" evidence="1">
    <location>
        <position position="30"/>
    </location>
    <ligand>
        <name>NADPH</name>
        <dbReference type="ChEBI" id="CHEBI:57783"/>
    </ligand>
</feature>
<feature type="binding site" evidence="1">
    <location>
        <position position="31"/>
    </location>
    <ligand>
        <name>NADPH</name>
        <dbReference type="ChEBI" id="CHEBI:57783"/>
    </ligand>
</feature>
<feature type="binding site" evidence="1">
    <location>
        <position position="51"/>
    </location>
    <ligand>
        <name>NADPH</name>
        <dbReference type="ChEBI" id="CHEBI:57783"/>
    </ligand>
</feature>
<feature type="binding site" evidence="1">
    <location>
        <position position="124"/>
    </location>
    <ligand>
        <name>NADPH</name>
        <dbReference type="ChEBI" id="CHEBI:57783"/>
    </ligand>
</feature>
<feature type="binding site" evidence="1">
    <location>
        <position position="124"/>
    </location>
    <ligand>
        <name>sn-glycerol 3-phosphate</name>
        <dbReference type="ChEBI" id="CHEBI:57597"/>
    </ligand>
</feature>
<feature type="binding site" evidence="1">
    <location>
        <position position="152"/>
    </location>
    <ligand>
        <name>sn-glycerol 3-phosphate</name>
        <dbReference type="ChEBI" id="CHEBI:57597"/>
    </ligand>
</feature>
<feature type="binding site" evidence="1">
    <location>
        <position position="156"/>
    </location>
    <ligand>
        <name>NADPH</name>
        <dbReference type="ChEBI" id="CHEBI:57783"/>
    </ligand>
</feature>
<feature type="binding site" evidence="1">
    <location>
        <position position="207"/>
    </location>
    <ligand>
        <name>sn-glycerol 3-phosphate</name>
        <dbReference type="ChEBI" id="CHEBI:57597"/>
    </ligand>
</feature>
<feature type="binding site" evidence="1">
    <location>
        <position position="260"/>
    </location>
    <ligand>
        <name>sn-glycerol 3-phosphate</name>
        <dbReference type="ChEBI" id="CHEBI:57597"/>
    </ligand>
</feature>
<feature type="binding site" evidence="1">
    <location>
        <position position="270"/>
    </location>
    <ligand>
        <name>sn-glycerol 3-phosphate</name>
        <dbReference type="ChEBI" id="CHEBI:57597"/>
    </ligand>
</feature>
<feature type="binding site" evidence="1">
    <location>
        <position position="271"/>
    </location>
    <ligand>
        <name>NADPH</name>
        <dbReference type="ChEBI" id="CHEBI:57783"/>
    </ligand>
</feature>
<feature type="binding site" evidence="1">
    <location>
        <position position="271"/>
    </location>
    <ligand>
        <name>sn-glycerol 3-phosphate</name>
        <dbReference type="ChEBI" id="CHEBI:57597"/>
    </ligand>
</feature>
<feature type="binding site" evidence="1">
    <location>
        <position position="272"/>
    </location>
    <ligand>
        <name>sn-glycerol 3-phosphate</name>
        <dbReference type="ChEBI" id="CHEBI:57597"/>
    </ligand>
</feature>
<feature type="binding site" evidence="1">
    <location>
        <position position="297"/>
    </location>
    <ligand>
        <name>NADPH</name>
        <dbReference type="ChEBI" id="CHEBI:57783"/>
    </ligand>
</feature>
<reference key="1">
    <citation type="journal article" date="2008" name="J. Bacteriol.">
        <title>Comparative genome sequence analysis of multidrug-resistant Acinetobacter baumannii.</title>
        <authorList>
            <person name="Adams M.D."/>
            <person name="Goglin K."/>
            <person name="Molyneaux N."/>
            <person name="Hujer K.M."/>
            <person name="Lavender H."/>
            <person name="Jamison J.J."/>
            <person name="MacDonald I.J."/>
            <person name="Martin K.M."/>
            <person name="Russo T."/>
            <person name="Campagnari A.A."/>
            <person name="Hujer A.M."/>
            <person name="Bonomo R.A."/>
            <person name="Gill S.R."/>
        </authorList>
    </citation>
    <scope>NUCLEOTIDE SEQUENCE [LARGE SCALE GENOMIC DNA]</scope>
    <source>
        <strain>AB307-0294</strain>
    </source>
</reference>
<evidence type="ECO:0000255" key="1">
    <source>
        <dbReference type="HAMAP-Rule" id="MF_00394"/>
    </source>
</evidence>
<sequence>MAEFKFTDLVEPVAVDKKTALRITVLGGGSFGTAMANLAARNGCDTMIWIRDAETAEEINKTHINKRYLPDFTLESSLRAVSDLEQAVCDRDIILVAIPSHSFRDVLKQIAPYITAQAVVSLTKGVEAKTFSFMSDIIREELPEVPYGVLSGPNLAKEIMAGMPSGTVIASDSELVRYAVQHALHSALFRVFGSDDVHGVELGGALKNIYAVAMGIGAAYKIGENTKSMILTRALAEMSRFAVKQGANPLTFLGLSGVGDLFATCNSPLSRNYQIGYALGSGKTLEQASKELGQTAEGINTIVQVRGKAQELDVYMPITNALYEVIFEGAPPLNIALSLMKNGHRSDVEFVLPHHEV</sequence>
<gene>
    <name evidence="1" type="primary">gpsA</name>
    <name type="ordered locus">ABBFA_001183</name>
</gene>